<evidence type="ECO:0000250" key="1"/>
<evidence type="ECO:0000305" key="2"/>
<accession>Q74ZY5</accession>
<dbReference type="EC" id="4.6.1.16"/>
<dbReference type="EMBL" id="AE016820">
    <property type="protein sequence ID" value="AAS54562.2"/>
    <property type="molecule type" value="Genomic_DNA"/>
</dbReference>
<dbReference type="RefSeq" id="NP_986738.2">
    <property type="nucleotide sequence ID" value="NM_211800.2"/>
</dbReference>
<dbReference type="SMR" id="Q74ZY5"/>
<dbReference type="FunCoup" id="Q74ZY5">
    <property type="interactions" value="78"/>
</dbReference>
<dbReference type="STRING" id="284811.Q74ZY5"/>
<dbReference type="EnsemblFungi" id="AAS54562">
    <property type="protein sequence ID" value="AAS54562"/>
    <property type="gene ID" value="AGOS_AGR073C"/>
</dbReference>
<dbReference type="GeneID" id="4623039"/>
<dbReference type="KEGG" id="ago:AGOS_AGR073C"/>
<dbReference type="eggNOG" id="KOG4685">
    <property type="taxonomic scope" value="Eukaryota"/>
</dbReference>
<dbReference type="HOGENOM" id="CLU_012847_2_0_1"/>
<dbReference type="InParanoid" id="Q74ZY5"/>
<dbReference type="OMA" id="AFYPNNP"/>
<dbReference type="OrthoDB" id="10249562at2759"/>
<dbReference type="Proteomes" id="UP000000591">
    <property type="component" value="Chromosome VII"/>
</dbReference>
<dbReference type="GO" id="GO:0005737">
    <property type="term" value="C:cytoplasm"/>
    <property type="evidence" value="ECO:0000318"/>
    <property type="project" value="GO_Central"/>
</dbReference>
<dbReference type="GO" id="GO:0005741">
    <property type="term" value="C:mitochondrial outer membrane"/>
    <property type="evidence" value="ECO:0007669"/>
    <property type="project" value="EnsemblFungi"/>
</dbReference>
<dbReference type="GO" id="GO:0000214">
    <property type="term" value="C:tRNA-intron endonuclease complex"/>
    <property type="evidence" value="ECO:0000318"/>
    <property type="project" value="GO_Central"/>
</dbReference>
<dbReference type="GO" id="GO:0016829">
    <property type="term" value="F:lyase activity"/>
    <property type="evidence" value="ECO:0007669"/>
    <property type="project" value="UniProtKB-KW"/>
</dbReference>
<dbReference type="GO" id="GO:0003676">
    <property type="term" value="F:nucleic acid binding"/>
    <property type="evidence" value="ECO:0007669"/>
    <property type="project" value="InterPro"/>
</dbReference>
<dbReference type="GO" id="GO:0000213">
    <property type="term" value="F:tRNA-intron endonuclease activity"/>
    <property type="evidence" value="ECO:0000318"/>
    <property type="project" value="GO_Central"/>
</dbReference>
<dbReference type="GO" id="GO:0008033">
    <property type="term" value="P:tRNA processing"/>
    <property type="evidence" value="ECO:0000318"/>
    <property type="project" value="GO_Central"/>
</dbReference>
<dbReference type="GO" id="GO:0000379">
    <property type="term" value="P:tRNA-type intron splice site recognition and cleavage"/>
    <property type="evidence" value="ECO:0000318"/>
    <property type="project" value="GO_Central"/>
</dbReference>
<dbReference type="CDD" id="cd22363">
    <property type="entry name" value="tRNA-intron_lyase_C"/>
    <property type="match status" value="1"/>
</dbReference>
<dbReference type="FunFam" id="3.40.1350.10:FF:000011">
    <property type="entry name" value="tRNA-splicing endonuclease subunit Sen2"/>
    <property type="match status" value="1"/>
</dbReference>
<dbReference type="Gene3D" id="3.40.1350.10">
    <property type="match status" value="1"/>
</dbReference>
<dbReference type="InterPro" id="IPR011856">
    <property type="entry name" value="tRNA_endonuc-like_dom_sf"/>
</dbReference>
<dbReference type="InterPro" id="IPR036167">
    <property type="entry name" value="tRNA_intron_Endo_cat-like_sf"/>
</dbReference>
<dbReference type="InterPro" id="IPR006677">
    <property type="entry name" value="tRNA_intron_Endonuc_cat-like"/>
</dbReference>
<dbReference type="InterPro" id="IPR006676">
    <property type="entry name" value="tRNA_splic"/>
</dbReference>
<dbReference type="InterPro" id="IPR016589">
    <property type="entry name" value="tRNA_splic_SEN2"/>
</dbReference>
<dbReference type="NCBIfam" id="TIGR00324">
    <property type="entry name" value="endA"/>
    <property type="match status" value="1"/>
</dbReference>
<dbReference type="PANTHER" id="PTHR21227">
    <property type="entry name" value="TRNA-SPLICING ENDONUCLEASE SUBUNIT SEN2"/>
    <property type="match status" value="1"/>
</dbReference>
<dbReference type="PANTHER" id="PTHR21227:SF0">
    <property type="entry name" value="TRNA-SPLICING ENDONUCLEASE SUBUNIT SEN2"/>
    <property type="match status" value="1"/>
</dbReference>
<dbReference type="Pfam" id="PF01974">
    <property type="entry name" value="tRNA_int_endo"/>
    <property type="match status" value="1"/>
</dbReference>
<dbReference type="PIRSF" id="PIRSF011789">
    <property type="entry name" value="tRNA_splic_SEN2"/>
    <property type="match status" value="1"/>
</dbReference>
<dbReference type="SUPFAM" id="SSF53032">
    <property type="entry name" value="tRNA-intron endonuclease catalytic domain-like"/>
    <property type="match status" value="1"/>
</dbReference>
<keyword id="KW-0456">Lyase</keyword>
<keyword id="KW-1185">Reference proteome</keyword>
<keyword id="KW-0819">tRNA processing</keyword>
<organism>
    <name type="scientific">Eremothecium gossypii (strain ATCC 10895 / CBS 109.51 / FGSC 9923 / NRRL Y-1056)</name>
    <name type="common">Yeast</name>
    <name type="synonym">Ashbya gossypii</name>
    <dbReference type="NCBI Taxonomy" id="284811"/>
    <lineage>
        <taxon>Eukaryota</taxon>
        <taxon>Fungi</taxon>
        <taxon>Dikarya</taxon>
        <taxon>Ascomycota</taxon>
        <taxon>Saccharomycotina</taxon>
        <taxon>Saccharomycetes</taxon>
        <taxon>Saccharomycetales</taxon>
        <taxon>Saccharomycetaceae</taxon>
        <taxon>Eremothecium</taxon>
    </lineage>
</organism>
<sequence length="356" mass="41096">MAKRVAGSKRYVHPLPIEPVVLPPLIAHNPLSWVYWVLAYVTSSNQLPRKIPLEVGADGRYTVTGREQMQYLWEHGFFGTGQLSRSEPTWQARTVDRLQLDTEGIAGHKLEQVTQLRRKQRLEFKRERASFERKRLELRRQGVLESEILEQERLWLKQLRDRELQWEASTGDPSPVRAEDAEIIAEDGASVLPIEKLELMPVEALFLTLALPVLHADAPAILARTLGPQPALPQIERLCRLYAAYHHYRSHGWCVRSGIKFGCDFLLYRRGPPFHHAEFSVMVLAPDERHDYTWYSTVARVVGGAQKTLVLAYVARRAAADQLAALWHARRYMEAFALFEVHELVYRRWLPGKNRE</sequence>
<name>SEN2_EREGS</name>
<protein>
    <recommendedName>
        <fullName>tRNA-splicing endonuclease subunit SEN2</fullName>
        <ecNumber>4.6.1.16</ecNumber>
    </recommendedName>
    <alternativeName>
        <fullName>tRNA-intron endonuclease SEN2</fullName>
    </alternativeName>
</protein>
<comment type="function">
    <text evidence="1">Constitutes one of the two catalytic subunit of the tRNA-splicing endonuclease complex, a complex responsible for identification and cleavage of the splice sites in pre-tRNA. It cleaves pre-tRNA at the 5'- and 3'-splice sites to release the intron. The products are an intron and two tRNA half-molecules bearing 2',3'-cyclic phosphate and 5'-OH termini. There are no conserved sequences at the splice sites, but the intron is invariably located at the same site in the gene, placing the splice sites an invariant distance from the constant structural features of the tRNA body. This subunit may anchor the endonuclease complex to the nuclear membrane. Probably carries the active site for 5'-splice site cleavage (By similarity).</text>
</comment>
<comment type="catalytic activity">
    <reaction>
        <text>pretRNA = a 3'-half-tRNA molecule with a 5'-OH end + a 5'-half-tRNA molecule with a 2',3'-cyclic phosphate end + an intron with a 2',3'-cyclic phosphate and a 5'-hydroxyl terminus.</text>
        <dbReference type="EC" id="4.6.1.16"/>
    </reaction>
</comment>
<comment type="subunit">
    <text evidence="1">Heterotetramer composed of SEN2, SEN15, SEN34 and SEN54. Interacts directly with SEN54 (By similarity).</text>
</comment>
<comment type="similarity">
    <text evidence="2">Belongs to the tRNA-intron endonuclease family.</text>
</comment>
<gene>
    <name type="primary">SEN2</name>
    <name type="ordered locus">AGR073C</name>
</gene>
<proteinExistence type="inferred from homology"/>
<reference key="1">
    <citation type="journal article" date="2004" name="Science">
        <title>The Ashbya gossypii genome as a tool for mapping the ancient Saccharomyces cerevisiae genome.</title>
        <authorList>
            <person name="Dietrich F.S."/>
            <person name="Voegeli S."/>
            <person name="Brachat S."/>
            <person name="Lerch A."/>
            <person name="Gates K."/>
            <person name="Steiner S."/>
            <person name="Mohr C."/>
            <person name="Poehlmann R."/>
            <person name="Luedi P."/>
            <person name="Choi S."/>
            <person name="Wing R.A."/>
            <person name="Flavier A."/>
            <person name="Gaffney T.D."/>
            <person name="Philippsen P."/>
        </authorList>
    </citation>
    <scope>NUCLEOTIDE SEQUENCE [LARGE SCALE GENOMIC DNA]</scope>
    <source>
        <strain>ATCC 10895 / CBS 109.51 / FGSC 9923 / NRRL Y-1056</strain>
    </source>
</reference>
<reference key="2">
    <citation type="journal article" date="2013" name="G3 (Bethesda)">
        <title>Genomes of Ashbya fungi isolated from insects reveal four mating-type loci, numerous translocations, lack of transposons, and distinct gene duplications.</title>
        <authorList>
            <person name="Dietrich F.S."/>
            <person name="Voegeli S."/>
            <person name="Kuo S."/>
            <person name="Philippsen P."/>
        </authorList>
    </citation>
    <scope>GENOME REANNOTATION</scope>
    <scope>SEQUENCE REVISION TO 299; 303; 306; 315; 319-320; 324 AND 339-340</scope>
    <source>
        <strain>ATCC 10895 / CBS 109.51 / FGSC 9923 / NRRL Y-1056</strain>
    </source>
</reference>
<feature type="chain" id="PRO_0000109459" description="tRNA-splicing endonuclease subunit SEN2">
    <location>
        <begin position="1"/>
        <end position="356"/>
    </location>
</feature>
<feature type="active site" evidence="1">
    <location>
        <position position="268"/>
    </location>
</feature>
<feature type="active site" evidence="1">
    <location>
        <position position="276"/>
    </location>
</feature>
<feature type="active site" evidence="1">
    <location>
        <position position="307"/>
    </location>
</feature>